<sequence>MVTMEELREMDCSVLKRLMNRDENGGGAGGSGSHGTLGLPSGGKCLLLDCRPFLAHSAGYILGSVNVRCNTIVRRRAKGSVSLEQILPAEEEVRARLRSGLYSAVIVYDERSPRAESLREDSTVSLVVQALRRNAERTDICLLKGGYERFSSEYPEFCSKTKALAAIPPPVPPSATEPLDLGCSSCGTPLHDQGGPVEILPFLYLGSAYHAARRDMLDALGITALLNVSSDCPNHFEGHYQYKCIPVEDNHKADISSWFMEAIEYIDAVKDCRGRVLVHCQAGISRSATICLAYLMMKKRVRLEEAFEFVKQRRSIISPNFSFMGQLLQFESQVLATSCAAEAASPSGPLRERGKTPATPTSQFVFSFPVSVGVHSAPSSLPYLHSPITTSPSC</sequence>
<protein>
    <recommendedName>
        <fullName>Dual specificity protein phosphatase 4</fullName>
        <ecNumber evidence="7">3.1.3.16</ecNumber>
        <ecNumber evidence="7">3.1.3.48</ecNumber>
    </recommendedName>
    <alternativeName>
        <fullName>Dual specificity protein phosphatase hVH2</fullName>
    </alternativeName>
    <alternativeName>
        <fullName>Mitogen-activated protein kinase phosphatase 2</fullName>
        <shortName>MAP kinase phosphatase 2</shortName>
        <shortName>MKP-2</shortName>
    </alternativeName>
</protein>
<gene>
    <name type="primary">DUSP4</name>
    <name type="synonym">MKP2</name>
    <name type="synonym">VH2</name>
</gene>
<feature type="initiator methionine" description="Removed" evidence="6">
    <location>
        <position position="1"/>
    </location>
</feature>
<feature type="chain" id="PRO_0000094798" description="Dual specificity protein phosphatase 4">
    <location>
        <begin position="2"/>
        <end position="394"/>
    </location>
</feature>
<feature type="domain" description="Rhodanese" evidence="2">
    <location>
        <begin position="41"/>
        <end position="159"/>
    </location>
</feature>
<feature type="domain" description="Tyrosine-protein phosphatase" evidence="1">
    <location>
        <begin position="195"/>
        <end position="336"/>
    </location>
</feature>
<feature type="active site" description="Phosphocysteine intermediate" evidence="1">
    <location>
        <position position="280"/>
    </location>
</feature>
<feature type="modified residue" description="N-acetylvaline" evidence="6">
    <location>
        <position position="2"/>
    </location>
</feature>
<feature type="modified residue" description="Phosphoserine; by MAPK" evidence="5">
    <location>
        <position position="386"/>
    </location>
</feature>
<feature type="modified residue" description="Phosphoserine; by MAPK" evidence="5">
    <location>
        <position position="391"/>
    </location>
</feature>
<feature type="splice variant" id="VSP_044667" description="In isoform 2." evidence="8">
    <original>MVTMEELREMDCSVLKRLMNRDENGGGAGGSGSHGTLGLPSGGKCLLLDCRPF</original>
    <variation>MGRKVHSNGSQFAEHSRSPRRTGRDCKPVRAPSMALGVSQLAGRSRCLCSESQ</variation>
    <location>
        <begin position="1"/>
        <end position="53"/>
    </location>
</feature>
<feature type="splice variant" id="VSP_044668" description="In isoform 2." evidence="8">
    <location>
        <begin position="54"/>
        <end position="144"/>
    </location>
</feature>
<feature type="sequence conflict" description="In Ref. 2; AAC50452." evidence="9" ref="2">
    <original>R</original>
    <variation>G</variation>
    <location>
        <position position="111"/>
    </location>
</feature>
<feature type="strand" evidence="10">
    <location>
        <begin position="197"/>
        <end position="200"/>
    </location>
</feature>
<feature type="strand" evidence="10">
    <location>
        <begin position="203"/>
        <end position="207"/>
    </location>
</feature>
<feature type="helix" evidence="10">
    <location>
        <begin position="208"/>
        <end position="211"/>
    </location>
</feature>
<feature type="helix" evidence="10">
    <location>
        <begin position="214"/>
        <end position="219"/>
    </location>
</feature>
<feature type="strand" evidence="10">
    <location>
        <begin position="224"/>
        <end position="227"/>
    </location>
</feature>
<feature type="strand" evidence="10">
    <location>
        <begin position="229"/>
        <end position="231"/>
    </location>
</feature>
<feature type="turn" evidence="10">
    <location>
        <begin position="235"/>
        <end position="239"/>
    </location>
</feature>
<feature type="strand" evidence="10">
    <location>
        <begin position="240"/>
        <end position="244"/>
    </location>
</feature>
<feature type="strand" evidence="10">
    <location>
        <begin position="249"/>
        <end position="252"/>
    </location>
</feature>
<feature type="turn" evidence="10">
    <location>
        <begin position="255"/>
        <end position="258"/>
    </location>
</feature>
<feature type="helix" evidence="10">
    <location>
        <begin position="259"/>
        <end position="271"/>
    </location>
</feature>
<feature type="strand" evidence="10">
    <location>
        <begin position="276"/>
        <end position="285"/>
    </location>
</feature>
<feature type="helix" evidence="10">
    <location>
        <begin position="286"/>
        <end position="299"/>
    </location>
</feature>
<feature type="helix" evidence="10">
    <location>
        <begin position="303"/>
        <end position="311"/>
    </location>
</feature>
<feature type="helix" evidence="10">
    <location>
        <begin position="321"/>
        <end position="335"/>
    </location>
</feature>
<proteinExistence type="evidence at protein level"/>
<accession>Q13115</accession>
<accession>B2RBU5</accession>
<accession>D3DSU4</accession>
<accession>G5E930</accession>
<accession>Q13524</accession>
<reference key="1">
    <citation type="journal article" date="1995" name="J. Biol. Chem.">
        <title>Isolation and characterization of a novel dual specific phosphatase, HVH2, which selectively dephosphorylates the mitogen-activated protein kinase.</title>
        <authorList>
            <person name="Guan K.-L."/>
            <person name="Butch E."/>
        </authorList>
    </citation>
    <scope>NUCLEOTIDE SEQUENCE [MRNA] (ISOFORM 1)</scope>
    <scope>FUNCTION</scope>
    <scope>CATALYTIC ACTIVITY</scope>
    <scope>SUBCELLULAR LOCATION</scope>
</reference>
<reference key="2">
    <citation type="journal article" date="1996" name="J. Biol. Chem.">
        <title>The mitogen-activated protein kinase phosphatases PAC1, MKP-1, and MKP-2 have unique substrate specificities and reduced activity in vivo toward the ERK2 sevenmaker mutation.</title>
        <authorList>
            <person name="Chu Y."/>
            <person name="Solski P.A."/>
            <person name="Khosravi-Far R."/>
            <person name="Der C.J."/>
            <person name="Kelly K."/>
        </authorList>
    </citation>
    <scope>NUCLEOTIDE SEQUENCE [MRNA] (ISOFORM 1)</scope>
</reference>
<reference key="3">
    <citation type="journal article" date="2004" name="Nat. Genet.">
        <title>Complete sequencing and characterization of 21,243 full-length human cDNAs.</title>
        <authorList>
            <person name="Ota T."/>
            <person name="Suzuki Y."/>
            <person name="Nishikawa T."/>
            <person name="Otsuki T."/>
            <person name="Sugiyama T."/>
            <person name="Irie R."/>
            <person name="Wakamatsu A."/>
            <person name="Hayashi K."/>
            <person name="Sato H."/>
            <person name="Nagai K."/>
            <person name="Kimura K."/>
            <person name="Makita H."/>
            <person name="Sekine M."/>
            <person name="Obayashi M."/>
            <person name="Nishi T."/>
            <person name="Shibahara T."/>
            <person name="Tanaka T."/>
            <person name="Ishii S."/>
            <person name="Yamamoto J."/>
            <person name="Saito K."/>
            <person name="Kawai Y."/>
            <person name="Isono Y."/>
            <person name="Nakamura Y."/>
            <person name="Nagahari K."/>
            <person name="Murakami K."/>
            <person name="Yasuda T."/>
            <person name="Iwayanagi T."/>
            <person name="Wagatsuma M."/>
            <person name="Shiratori A."/>
            <person name="Sudo H."/>
            <person name="Hosoiri T."/>
            <person name="Kaku Y."/>
            <person name="Kodaira H."/>
            <person name="Kondo H."/>
            <person name="Sugawara M."/>
            <person name="Takahashi M."/>
            <person name="Kanda K."/>
            <person name="Yokoi T."/>
            <person name="Furuya T."/>
            <person name="Kikkawa E."/>
            <person name="Omura Y."/>
            <person name="Abe K."/>
            <person name="Kamihara K."/>
            <person name="Katsuta N."/>
            <person name="Sato K."/>
            <person name="Tanikawa M."/>
            <person name="Yamazaki M."/>
            <person name="Ninomiya K."/>
            <person name="Ishibashi T."/>
            <person name="Yamashita H."/>
            <person name="Murakawa K."/>
            <person name="Fujimori K."/>
            <person name="Tanai H."/>
            <person name="Kimata M."/>
            <person name="Watanabe M."/>
            <person name="Hiraoka S."/>
            <person name="Chiba Y."/>
            <person name="Ishida S."/>
            <person name="Ono Y."/>
            <person name="Takiguchi S."/>
            <person name="Watanabe S."/>
            <person name="Yosida M."/>
            <person name="Hotuta T."/>
            <person name="Kusano J."/>
            <person name="Kanehori K."/>
            <person name="Takahashi-Fujii A."/>
            <person name="Hara H."/>
            <person name="Tanase T.-O."/>
            <person name="Nomura Y."/>
            <person name="Togiya S."/>
            <person name="Komai F."/>
            <person name="Hara R."/>
            <person name="Takeuchi K."/>
            <person name="Arita M."/>
            <person name="Imose N."/>
            <person name="Musashino K."/>
            <person name="Yuuki H."/>
            <person name="Oshima A."/>
            <person name="Sasaki N."/>
            <person name="Aotsuka S."/>
            <person name="Yoshikawa Y."/>
            <person name="Matsunawa H."/>
            <person name="Ichihara T."/>
            <person name="Shiohata N."/>
            <person name="Sano S."/>
            <person name="Moriya S."/>
            <person name="Momiyama H."/>
            <person name="Satoh N."/>
            <person name="Takami S."/>
            <person name="Terashima Y."/>
            <person name="Suzuki O."/>
            <person name="Nakagawa S."/>
            <person name="Senoh A."/>
            <person name="Mizoguchi H."/>
            <person name="Goto Y."/>
            <person name="Shimizu F."/>
            <person name="Wakebe H."/>
            <person name="Hishigaki H."/>
            <person name="Watanabe T."/>
            <person name="Sugiyama A."/>
            <person name="Takemoto M."/>
            <person name="Kawakami B."/>
            <person name="Yamazaki M."/>
            <person name="Watanabe K."/>
            <person name="Kumagai A."/>
            <person name="Itakura S."/>
            <person name="Fukuzumi Y."/>
            <person name="Fujimori Y."/>
            <person name="Komiyama M."/>
            <person name="Tashiro H."/>
            <person name="Tanigami A."/>
            <person name="Fujiwara T."/>
            <person name="Ono T."/>
            <person name="Yamada K."/>
            <person name="Fujii Y."/>
            <person name="Ozaki K."/>
            <person name="Hirao M."/>
            <person name="Ohmori Y."/>
            <person name="Kawabata A."/>
            <person name="Hikiji T."/>
            <person name="Kobatake N."/>
            <person name="Inagaki H."/>
            <person name="Ikema Y."/>
            <person name="Okamoto S."/>
            <person name="Okitani R."/>
            <person name="Kawakami T."/>
            <person name="Noguchi S."/>
            <person name="Itoh T."/>
            <person name="Shigeta K."/>
            <person name="Senba T."/>
            <person name="Matsumura K."/>
            <person name="Nakajima Y."/>
            <person name="Mizuno T."/>
            <person name="Morinaga M."/>
            <person name="Sasaki M."/>
            <person name="Togashi T."/>
            <person name="Oyama M."/>
            <person name="Hata H."/>
            <person name="Watanabe M."/>
            <person name="Komatsu T."/>
            <person name="Mizushima-Sugano J."/>
            <person name="Satoh T."/>
            <person name="Shirai Y."/>
            <person name="Takahashi Y."/>
            <person name="Nakagawa K."/>
            <person name="Okumura K."/>
            <person name="Nagase T."/>
            <person name="Nomura N."/>
            <person name="Kikuchi H."/>
            <person name="Masuho Y."/>
            <person name="Yamashita R."/>
            <person name="Nakai K."/>
            <person name="Yada T."/>
            <person name="Nakamura Y."/>
            <person name="Ohara O."/>
            <person name="Isogai T."/>
            <person name="Sugano S."/>
        </authorList>
    </citation>
    <scope>NUCLEOTIDE SEQUENCE [LARGE SCALE MRNA] (ISOFORM 1)</scope>
</reference>
<reference key="4">
    <citation type="journal article" date="2007" name="BMC Genomics">
        <title>The full-ORF clone resource of the German cDNA consortium.</title>
        <authorList>
            <person name="Bechtel S."/>
            <person name="Rosenfelder H."/>
            <person name="Duda A."/>
            <person name="Schmidt C.P."/>
            <person name="Ernst U."/>
            <person name="Wellenreuther R."/>
            <person name="Mehrle A."/>
            <person name="Schuster C."/>
            <person name="Bahr A."/>
            <person name="Bloecker H."/>
            <person name="Heubner D."/>
            <person name="Hoerlein A."/>
            <person name="Michel G."/>
            <person name="Wedler H."/>
            <person name="Koehrer K."/>
            <person name="Ottenwaelder B."/>
            <person name="Poustka A."/>
            <person name="Wiemann S."/>
            <person name="Schupp I."/>
        </authorList>
    </citation>
    <scope>NUCLEOTIDE SEQUENCE [LARGE SCALE MRNA] (ISOFORM 2)</scope>
    <source>
        <tissue>Testis</tissue>
    </source>
</reference>
<reference key="5">
    <citation type="journal article" date="2006" name="Nature">
        <title>DNA sequence and analysis of human chromosome 8.</title>
        <authorList>
            <person name="Nusbaum C."/>
            <person name="Mikkelsen T.S."/>
            <person name="Zody M.C."/>
            <person name="Asakawa S."/>
            <person name="Taudien S."/>
            <person name="Garber M."/>
            <person name="Kodira C.D."/>
            <person name="Schueler M.G."/>
            <person name="Shimizu A."/>
            <person name="Whittaker C.A."/>
            <person name="Chang J.L."/>
            <person name="Cuomo C.A."/>
            <person name="Dewar K."/>
            <person name="FitzGerald M.G."/>
            <person name="Yang X."/>
            <person name="Allen N.R."/>
            <person name="Anderson S."/>
            <person name="Asakawa T."/>
            <person name="Blechschmidt K."/>
            <person name="Bloom T."/>
            <person name="Borowsky M.L."/>
            <person name="Butler J."/>
            <person name="Cook A."/>
            <person name="Corum B."/>
            <person name="DeArellano K."/>
            <person name="DeCaprio D."/>
            <person name="Dooley K.T."/>
            <person name="Dorris L. III"/>
            <person name="Engels R."/>
            <person name="Gloeckner G."/>
            <person name="Hafez N."/>
            <person name="Hagopian D.S."/>
            <person name="Hall J.L."/>
            <person name="Ishikawa S.K."/>
            <person name="Jaffe D.B."/>
            <person name="Kamat A."/>
            <person name="Kudoh J."/>
            <person name="Lehmann R."/>
            <person name="Lokitsang T."/>
            <person name="Macdonald P."/>
            <person name="Major J.E."/>
            <person name="Matthews C.D."/>
            <person name="Mauceli E."/>
            <person name="Menzel U."/>
            <person name="Mihalev A.H."/>
            <person name="Minoshima S."/>
            <person name="Murayama Y."/>
            <person name="Naylor J.W."/>
            <person name="Nicol R."/>
            <person name="Nguyen C."/>
            <person name="O'Leary S.B."/>
            <person name="O'Neill K."/>
            <person name="Parker S.C.J."/>
            <person name="Polley A."/>
            <person name="Raymond C.K."/>
            <person name="Reichwald K."/>
            <person name="Rodriguez J."/>
            <person name="Sasaki T."/>
            <person name="Schilhabel M."/>
            <person name="Siddiqui R."/>
            <person name="Smith C.L."/>
            <person name="Sneddon T.P."/>
            <person name="Talamas J.A."/>
            <person name="Tenzin P."/>
            <person name="Topham K."/>
            <person name="Venkataraman V."/>
            <person name="Wen G."/>
            <person name="Yamazaki S."/>
            <person name="Young S.K."/>
            <person name="Zeng Q."/>
            <person name="Zimmer A.R."/>
            <person name="Rosenthal A."/>
            <person name="Birren B.W."/>
            <person name="Platzer M."/>
            <person name="Shimizu N."/>
            <person name="Lander E.S."/>
        </authorList>
    </citation>
    <scope>NUCLEOTIDE SEQUENCE [LARGE SCALE GENOMIC DNA]</scope>
</reference>
<reference key="6">
    <citation type="submission" date="2005-09" db="EMBL/GenBank/DDBJ databases">
        <authorList>
            <person name="Mural R.J."/>
            <person name="Istrail S."/>
            <person name="Sutton G.G."/>
            <person name="Florea L."/>
            <person name="Halpern A.L."/>
            <person name="Mobarry C.M."/>
            <person name="Lippert R."/>
            <person name="Walenz B."/>
            <person name="Shatkay H."/>
            <person name="Dew I."/>
            <person name="Miller J.R."/>
            <person name="Flanigan M.J."/>
            <person name="Edwards N.J."/>
            <person name="Bolanos R."/>
            <person name="Fasulo D."/>
            <person name="Halldorsson B.V."/>
            <person name="Hannenhalli S."/>
            <person name="Turner R."/>
            <person name="Yooseph S."/>
            <person name="Lu F."/>
            <person name="Nusskern D.R."/>
            <person name="Shue B.C."/>
            <person name="Zheng X.H."/>
            <person name="Zhong F."/>
            <person name="Delcher A.L."/>
            <person name="Huson D.H."/>
            <person name="Kravitz S.A."/>
            <person name="Mouchard L."/>
            <person name="Reinert K."/>
            <person name="Remington K.A."/>
            <person name="Clark A.G."/>
            <person name="Waterman M.S."/>
            <person name="Eichler E.E."/>
            <person name="Adams M.D."/>
            <person name="Hunkapiller M.W."/>
            <person name="Myers E.W."/>
            <person name="Venter J.C."/>
        </authorList>
    </citation>
    <scope>NUCLEOTIDE SEQUENCE [LARGE SCALE GENOMIC DNA]</scope>
</reference>
<reference key="7">
    <citation type="journal article" date="2004" name="Genome Res.">
        <title>The status, quality, and expansion of the NIH full-length cDNA project: the Mammalian Gene Collection (MGC).</title>
        <authorList>
            <consortium name="The MGC Project Team"/>
        </authorList>
    </citation>
    <scope>NUCLEOTIDE SEQUENCE [LARGE SCALE MRNA] (ISOFORM 1)</scope>
    <source>
        <tissue>Skin</tissue>
        <tissue>Uterus</tissue>
    </source>
</reference>
<reference key="8">
    <citation type="journal article" date="2010" name="Cell Cycle">
        <title>Post-translational regulation of mitogen-activated protein kinase phosphatase-2 (MKP-2) by ERK.</title>
        <authorList>
            <person name="Peng D.J."/>
            <person name="Zhou J.Y."/>
            <person name="Wu G.S."/>
        </authorList>
    </citation>
    <scope>PHOSPHORYLATION AT SER-386 AND SER-391</scope>
</reference>
<reference key="9">
    <citation type="journal article" date="2010" name="Cell. Signal.">
        <title>Differential regulation of MAP kinase activation by a novel splice variant of human MAP kinase phosphatase-2.</title>
        <authorList>
            <person name="Cadalbert L.C."/>
            <person name="Sloss C.M."/>
            <person name="Cunningham M.R."/>
            <person name="Al-Mutairi M."/>
            <person name="McIntire A."/>
            <person name="Shipley J."/>
            <person name="Plevin R."/>
        </authorList>
    </citation>
    <scope>ALTERNATIVE SPLICING</scope>
</reference>
<reference key="10">
    <citation type="journal article" date="2012" name="Proc. Natl. Acad. Sci. U.S.A.">
        <title>N-terminal acetylome analyses and functional insights of the N-terminal acetyltransferase NatB.</title>
        <authorList>
            <person name="Van Damme P."/>
            <person name="Lasa M."/>
            <person name="Polevoda B."/>
            <person name="Gazquez C."/>
            <person name="Elosegui-Artola A."/>
            <person name="Kim D.S."/>
            <person name="De Juan-Pardo E."/>
            <person name="Demeyer K."/>
            <person name="Hole K."/>
            <person name="Larrea E."/>
            <person name="Timmerman E."/>
            <person name="Prieto J."/>
            <person name="Arnesen T."/>
            <person name="Sherman F."/>
            <person name="Gevaert K."/>
            <person name="Aldabe R."/>
        </authorList>
    </citation>
    <scope>IDENTIFICATION BY MASS SPECTROMETRY [LARGE SCALE ANALYSIS]</scope>
</reference>
<reference key="11">
    <citation type="journal article" date="2015" name="Hum. Mol. Genet.">
        <title>Biochemical and cellular analysis of Ogden syndrome reveals downstream Nt-acetylation defects.</title>
        <authorList>
            <person name="Myklebust L.M."/>
            <person name="Van Damme P."/>
            <person name="Stoeve S.I."/>
            <person name="Doerfel M.J."/>
            <person name="Abboud A."/>
            <person name="Kalvik T.V."/>
            <person name="Grauffel C."/>
            <person name="Jonckheere V."/>
            <person name="Wu Y."/>
            <person name="Swensen J."/>
            <person name="Kaasa H."/>
            <person name="Liszczak G."/>
            <person name="Marmorstein R."/>
            <person name="Reuter N."/>
            <person name="Lyon G.J."/>
            <person name="Gevaert K."/>
            <person name="Arnesen T."/>
        </authorList>
    </citation>
    <scope>ACETYLATION AT VAL-2</scope>
    <scope>CLEAVAGE OF INITIATOR METHIONINE</scope>
</reference>
<reference key="12">
    <citation type="journal article" date="2009" name="Proteins">
        <title>Crystal structure of the catalytic domain of human MKP-2 reveals a 24-mer assembly.</title>
        <authorList>
            <person name="Jeong D.G."/>
            <person name="Jung S.K."/>
            <person name="Yoon T.S."/>
            <person name="Woo E.J."/>
            <person name="Kim J.H."/>
            <person name="Park B.C."/>
            <person name="Ryu S.E."/>
            <person name="Kim S.J."/>
        </authorList>
    </citation>
    <scope>X-RAY CRYSTALLOGRAPHY (2.9 ANGSTROMS) OF 194-336</scope>
    <scope>SUBUNIT</scope>
</reference>
<organism>
    <name type="scientific">Homo sapiens</name>
    <name type="common">Human</name>
    <dbReference type="NCBI Taxonomy" id="9606"/>
    <lineage>
        <taxon>Eukaryota</taxon>
        <taxon>Metazoa</taxon>
        <taxon>Chordata</taxon>
        <taxon>Craniata</taxon>
        <taxon>Vertebrata</taxon>
        <taxon>Euteleostomi</taxon>
        <taxon>Mammalia</taxon>
        <taxon>Eutheria</taxon>
        <taxon>Euarchontoglires</taxon>
        <taxon>Primates</taxon>
        <taxon>Haplorrhini</taxon>
        <taxon>Catarrhini</taxon>
        <taxon>Hominidae</taxon>
        <taxon>Homo</taxon>
    </lineage>
</organism>
<comment type="function">
    <text evidence="7">Regulates mitogenic signal transduction by dephosphorylating both Thr and Tyr residues on MAP kinases ERK1 and ERK2.</text>
</comment>
<comment type="catalytic activity">
    <reaction evidence="3 7">
        <text>O-phospho-L-tyrosyl-[protein] + H2O = L-tyrosyl-[protein] + phosphate</text>
        <dbReference type="Rhea" id="RHEA:10684"/>
        <dbReference type="Rhea" id="RHEA-COMP:10136"/>
        <dbReference type="Rhea" id="RHEA-COMP:20101"/>
        <dbReference type="ChEBI" id="CHEBI:15377"/>
        <dbReference type="ChEBI" id="CHEBI:43474"/>
        <dbReference type="ChEBI" id="CHEBI:46858"/>
        <dbReference type="ChEBI" id="CHEBI:61978"/>
        <dbReference type="EC" id="3.1.3.48"/>
    </reaction>
</comment>
<comment type="catalytic activity">
    <reaction evidence="7">
        <text>O-phospho-L-seryl-[protein] + H2O = L-seryl-[protein] + phosphate</text>
        <dbReference type="Rhea" id="RHEA:20629"/>
        <dbReference type="Rhea" id="RHEA-COMP:9863"/>
        <dbReference type="Rhea" id="RHEA-COMP:11604"/>
        <dbReference type="ChEBI" id="CHEBI:15377"/>
        <dbReference type="ChEBI" id="CHEBI:29999"/>
        <dbReference type="ChEBI" id="CHEBI:43474"/>
        <dbReference type="ChEBI" id="CHEBI:83421"/>
        <dbReference type="EC" id="3.1.3.16"/>
    </reaction>
</comment>
<comment type="catalytic activity">
    <reaction evidence="7">
        <text>O-phospho-L-threonyl-[protein] + H2O = L-threonyl-[protein] + phosphate</text>
        <dbReference type="Rhea" id="RHEA:47004"/>
        <dbReference type="Rhea" id="RHEA-COMP:11060"/>
        <dbReference type="Rhea" id="RHEA-COMP:11605"/>
        <dbReference type="ChEBI" id="CHEBI:15377"/>
        <dbReference type="ChEBI" id="CHEBI:30013"/>
        <dbReference type="ChEBI" id="CHEBI:43474"/>
        <dbReference type="ChEBI" id="CHEBI:61977"/>
        <dbReference type="EC" id="3.1.3.16"/>
    </reaction>
</comment>
<comment type="subunit">
    <text evidence="4">Hollow spherical complex composed of 24 subunits with pseudooctahedral symmetry, has a tetramer as the basic unit.</text>
</comment>
<comment type="interaction">
    <interactant intactId="EBI-6591081">
        <id>Q13115</id>
    </interactant>
    <interactant intactId="EBI-739467">
        <id>Q9H8Y8</id>
        <label>GORASP2</label>
    </interactant>
    <organismsDiffer>false</organismsDiffer>
    <experiments>3</experiments>
</comment>
<comment type="interaction">
    <interactant intactId="EBI-6591081">
        <id>Q13115</id>
    </interactant>
    <interactant intactId="EBI-10293291">
        <id>Q96S90</id>
        <label>LYSMD1</label>
    </interactant>
    <organismsDiffer>false</organismsDiffer>
    <experiments>3</experiments>
</comment>
<comment type="interaction">
    <interactant intactId="EBI-6591081">
        <id>Q13115</id>
    </interactant>
    <interactant intactId="EBI-19761491">
        <id>Q8IV50-2</id>
        <label>LYSMD2</label>
    </interactant>
    <organismsDiffer>false</organismsDiffer>
    <experiments>3</experiments>
</comment>
<comment type="interaction">
    <interactant intactId="EBI-6591081">
        <id>Q13115</id>
    </interactant>
    <interactant intactId="EBI-741037">
        <id>Q9BRK4</id>
        <label>LZTS2</label>
    </interactant>
    <organismsDiffer>false</organismsDiffer>
    <experiments>3</experiments>
</comment>
<comment type="interaction">
    <interactant intactId="EBI-6591081">
        <id>Q13115</id>
    </interactant>
    <interactant intactId="EBI-959949">
        <id>P28482</id>
        <label>MAPK1</label>
    </interactant>
    <organismsDiffer>false</organismsDiffer>
    <experiments>6</experiments>
</comment>
<comment type="interaction">
    <interactant intactId="EBI-6591081">
        <id>Q13115</id>
    </interactant>
    <interactant intactId="EBI-713568">
        <id>P45984</id>
        <label>MAPK9</label>
    </interactant>
    <organismsDiffer>false</organismsDiffer>
    <experiments>4</experiments>
</comment>
<comment type="interaction">
    <interactant intactId="EBI-6591081">
        <id>Q13115</id>
    </interactant>
    <interactant intactId="EBI-12025760">
        <id>Q86UR1-2</id>
        <label>NOXA1</label>
    </interactant>
    <organismsDiffer>false</organismsDiffer>
    <experiments>3</experiments>
</comment>
<comment type="interaction">
    <interactant intactId="EBI-6591081">
        <id>Q13115</id>
    </interactant>
    <interactant intactId="EBI-742388">
        <id>Q9H8W4</id>
        <label>PLEKHF2</label>
    </interactant>
    <organismsDiffer>false</organismsDiffer>
    <experiments>3</experiments>
</comment>
<comment type="interaction">
    <interactant intactId="EBI-6591081">
        <id>Q13115</id>
    </interactant>
    <interactant intactId="EBI-11139477">
        <id>Q96N21</id>
        <label>TEPSIN</label>
    </interactant>
    <organismsDiffer>false</organismsDiffer>
    <experiments>3</experiments>
</comment>
<comment type="interaction">
    <interactant intactId="EBI-6591081">
        <id>Q13115</id>
    </interactant>
    <interactant intactId="EBI-359224">
        <id>Q13077</id>
        <label>TRAF1</label>
    </interactant>
    <organismsDiffer>false</organismsDiffer>
    <experiments>3</experiments>
</comment>
<comment type="interaction">
    <interactant intactId="EBI-6591081">
        <id>Q13115</id>
    </interactant>
    <interactant intactId="EBI-743265">
        <id>Q9BUY5</id>
        <label>ZNF426</label>
    </interactant>
    <organismsDiffer>false</organismsDiffer>
    <experiments>3</experiments>
</comment>
<comment type="interaction">
    <interactant intactId="EBI-6591081">
        <id>Q13115</id>
    </interactant>
    <interactant intactId="EBI-625509">
        <id>Q8N720</id>
        <label>ZNF655</label>
    </interactant>
    <organismsDiffer>false</organismsDiffer>
    <experiments>3</experiments>
</comment>
<comment type="subcellular location">
    <subcellularLocation>
        <location evidence="7">Nucleus</location>
    </subcellularLocation>
</comment>
<comment type="alternative products">
    <event type="alternative splicing"/>
    <isoform>
        <id>Q13115-1</id>
        <name>1</name>
        <name>MKP-2-L</name>
        <sequence type="displayed"/>
    </isoform>
    <isoform>
        <id>Q13115-2</id>
        <name>2</name>
        <name>MKP-2-S</name>
        <sequence type="described" ref="VSP_044667 VSP_044668"/>
    </isoform>
</comment>
<comment type="PTM">
    <text evidence="5">Phosphorylation in the C-terminus by ERK1/2 inhibits proteasomal degradation and stabilizes the protein.</text>
</comment>
<comment type="miscellaneous">
    <molecule>Isoform 2</molecule>
    <text evidence="9">Does not bind to JNK or ERK, and is more susceptible to proteasomal degradation.</text>
</comment>
<comment type="similarity">
    <text evidence="9">Belongs to the protein-tyrosine phosphatase family. Non-receptor class dual specificity subfamily.</text>
</comment>
<dbReference type="EC" id="3.1.3.16" evidence="7"/>
<dbReference type="EC" id="3.1.3.48" evidence="7"/>
<dbReference type="EMBL" id="U21108">
    <property type="protein sequence ID" value="AAA85119.1"/>
    <property type="molecule type" value="mRNA"/>
</dbReference>
<dbReference type="EMBL" id="U48807">
    <property type="protein sequence ID" value="AAC50452.1"/>
    <property type="molecule type" value="mRNA"/>
</dbReference>
<dbReference type="EMBL" id="AK314820">
    <property type="protein sequence ID" value="BAG37342.1"/>
    <property type="molecule type" value="mRNA"/>
</dbReference>
<dbReference type="EMBL" id="AL137704">
    <property type="status" value="NOT_ANNOTATED_CDS"/>
    <property type="molecule type" value="mRNA"/>
</dbReference>
<dbReference type="EMBL" id="AC084262">
    <property type="status" value="NOT_ANNOTATED_CDS"/>
    <property type="molecule type" value="Genomic_DNA"/>
</dbReference>
<dbReference type="EMBL" id="CH471080">
    <property type="protein sequence ID" value="EAW63481.1"/>
    <property type="molecule type" value="Genomic_DNA"/>
</dbReference>
<dbReference type="EMBL" id="CH471080">
    <property type="protein sequence ID" value="EAW63482.1"/>
    <property type="molecule type" value="Genomic_DNA"/>
</dbReference>
<dbReference type="EMBL" id="CH471080">
    <property type="protein sequence ID" value="EAW63483.1"/>
    <property type="molecule type" value="Genomic_DNA"/>
</dbReference>
<dbReference type="EMBL" id="CH471080">
    <property type="protein sequence ID" value="EAW63484.1"/>
    <property type="molecule type" value="Genomic_DNA"/>
</dbReference>
<dbReference type="EMBL" id="BC002671">
    <property type="protein sequence ID" value="AAH02671.1"/>
    <property type="molecule type" value="mRNA"/>
</dbReference>
<dbReference type="EMBL" id="BC014565">
    <property type="protein sequence ID" value="AAH14565.1"/>
    <property type="molecule type" value="mRNA"/>
</dbReference>
<dbReference type="CCDS" id="CCDS6072.1">
    <molecule id="Q13115-1"/>
</dbReference>
<dbReference type="CCDS" id="CCDS6073.1">
    <molecule id="Q13115-2"/>
</dbReference>
<dbReference type="RefSeq" id="NP_001385.1">
    <molecule id="Q13115-1"/>
    <property type="nucleotide sequence ID" value="NM_001394.7"/>
</dbReference>
<dbReference type="RefSeq" id="NP_476499.1">
    <molecule id="Q13115-2"/>
    <property type="nucleotide sequence ID" value="NM_057158.4"/>
</dbReference>
<dbReference type="RefSeq" id="XP_011542730.1">
    <property type="nucleotide sequence ID" value="XM_011544428.2"/>
</dbReference>
<dbReference type="PDB" id="3EZZ">
    <property type="method" value="X-ray"/>
    <property type="resolution" value="2.90 A"/>
    <property type="chains" value="A/B/C/D/E/F=194-336"/>
</dbReference>
<dbReference type="PDBsum" id="3EZZ"/>
<dbReference type="SMR" id="Q13115"/>
<dbReference type="BioGRID" id="108179">
    <property type="interactions" value="122"/>
</dbReference>
<dbReference type="FunCoup" id="Q13115">
    <property type="interactions" value="2022"/>
</dbReference>
<dbReference type="IntAct" id="Q13115">
    <property type="interactions" value="71"/>
</dbReference>
<dbReference type="MINT" id="Q13115"/>
<dbReference type="STRING" id="9606.ENSP00000240100"/>
<dbReference type="BindingDB" id="Q13115"/>
<dbReference type="ChEMBL" id="CHEMBL2146343"/>
<dbReference type="DEPOD" id="DUSP4"/>
<dbReference type="GlyGen" id="Q13115">
    <property type="glycosylation" value="1 site, 1 O-linked glycan (1 site)"/>
</dbReference>
<dbReference type="iPTMnet" id="Q13115"/>
<dbReference type="PhosphoSitePlus" id="Q13115"/>
<dbReference type="BioMuta" id="DUSP4"/>
<dbReference type="DMDM" id="2499745"/>
<dbReference type="CPTAC" id="CPTAC-1565"/>
<dbReference type="jPOST" id="Q13115"/>
<dbReference type="MassIVE" id="Q13115"/>
<dbReference type="PaxDb" id="9606-ENSP00000240100"/>
<dbReference type="PeptideAtlas" id="Q13115"/>
<dbReference type="ProteomicsDB" id="33812"/>
<dbReference type="ProteomicsDB" id="59167">
    <molecule id="Q13115-1"/>
</dbReference>
<dbReference type="Antibodypedia" id="10497">
    <property type="antibodies" value="432 antibodies from 33 providers"/>
</dbReference>
<dbReference type="DNASU" id="1846"/>
<dbReference type="Ensembl" id="ENST00000240100.7">
    <molecule id="Q13115-1"/>
    <property type="protein sequence ID" value="ENSP00000240100.2"/>
    <property type="gene ID" value="ENSG00000120875.9"/>
</dbReference>
<dbReference type="Ensembl" id="ENST00000240101.2">
    <molecule id="Q13115-2"/>
    <property type="protein sequence ID" value="ENSP00000240101.2"/>
    <property type="gene ID" value="ENSG00000120875.9"/>
</dbReference>
<dbReference type="GeneID" id="1846"/>
<dbReference type="KEGG" id="hsa:1846"/>
<dbReference type="MANE-Select" id="ENST00000240100.7">
    <property type="protein sequence ID" value="ENSP00000240100.2"/>
    <property type="RefSeq nucleotide sequence ID" value="NM_001394.7"/>
    <property type="RefSeq protein sequence ID" value="NP_001385.1"/>
</dbReference>
<dbReference type="UCSC" id="uc003xhl.4">
    <molecule id="Q13115-1"/>
    <property type="organism name" value="human"/>
</dbReference>
<dbReference type="AGR" id="HGNC:3070"/>
<dbReference type="CTD" id="1846"/>
<dbReference type="DisGeNET" id="1846"/>
<dbReference type="GeneCards" id="DUSP4"/>
<dbReference type="HGNC" id="HGNC:3070">
    <property type="gene designation" value="DUSP4"/>
</dbReference>
<dbReference type="HPA" id="ENSG00000120875">
    <property type="expression patterns" value="Tissue enhanced (pancreas, stomach)"/>
</dbReference>
<dbReference type="MIM" id="602747">
    <property type="type" value="gene"/>
</dbReference>
<dbReference type="neXtProt" id="NX_Q13115"/>
<dbReference type="OpenTargets" id="ENSG00000120875"/>
<dbReference type="PharmGKB" id="PA27527"/>
<dbReference type="VEuPathDB" id="HostDB:ENSG00000120875"/>
<dbReference type="eggNOG" id="KOG1716">
    <property type="taxonomic scope" value="Eukaryota"/>
</dbReference>
<dbReference type="GeneTree" id="ENSGT00940000159066"/>
<dbReference type="HOGENOM" id="CLU_027074_0_2_1"/>
<dbReference type="InParanoid" id="Q13115"/>
<dbReference type="OMA" id="ELGEMDC"/>
<dbReference type="OrthoDB" id="165342at2759"/>
<dbReference type="PAN-GO" id="Q13115">
    <property type="GO annotations" value="6 GO annotations based on evolutionary models"/>
</dbReference>
<dbReference type="PhylomeDB" id="Q13115"/>
<dbReference type="TreeFam" id="TF105122"/>
<dbReference type="PathwayCommons" id="Q13115"/>
<dbReference type="Reactome" id="R-HSA-112409">
    <property type="pathway name" value="RAF-independent MAPK1/3 activation"/>
</dbReference>
<dbReference type="Reactome" id="R-HSA-202670">
    <property type="pathway name" value="ERKs are inactivated"/>
</dbReference>
<dbReference type="Reactome" id="R-HSA-5675221">
    <property type="pathway name" value="Negative regulation of MAPK pathway"/>
</dbReference>
<dbReference type="SignaLink" id="Q13115"/>
<dbReference type="SIGNOR" id="Q13115"/>
<dbReference type="BioGRID-ORCS" id="1846">
    <property type="hits" value="58 hits in 1176 CRISPR screens"/>
</dbReference>
<dbReference type="ChiTaRS" id="DUSP4">
    <property type="organism name" value="human"/>
</dbReference>
<dbReference type="EvolutionaryTrace" id="Q13115"/>
<dbReference type="GeneWiki" id="DUSP4"/>
<dbReference type="GenomeRNAi" id="1846"/>
<dbReference type="Pharos" id="Q13115">
    <property type="development level" value="Tbio"/>
</dbReference>
<dbReference type="PRO" id="PR:Q13115"/>
<dbReference type="Proteomes" id="UP000005640">
    <property type="component" value="Chromosome 8"/>
</dbReference>
<dbReference type="RNAct" id="Q13115">
    <property type="molecule type" value="protein"/>
</dbReference>
<dbReference type="Bgee" id="ENSG00000120875">
    <property type="expression patterns" value="Expressed in pigmented layer of retina and 153 other cell types or tissues"/>
</dbReference>
<dbReference type="GO" id="GO:0005737">
    <property type="term" value="C:cytoplasm"/>
    <property type="evidence" value="ECO:0000318"/>
    <property type="project" value="GO_Central"/>
</dbReference>
<dbReference type="GO" id="GO:0005654">
    <property type="term" value="C:nucleoplasm"/>
    <property type="evidence" value="ECO:0000314"/>
    <property type="project" value="HPA"/>
</dbReference>
<dbReference type="GO" id="GO:0005634">
    <property type="term" value="C:nucleus"/>
    <property type="evidence" value="ECO:0000314"/>
    <property type="project" value="UniProtKB"/>
</dbReference>
<dbReference type="GO" id="GO:1990439">
    <property type="term" value="F:MAP kinase serine/threonine phosphatase activity"/>
    <property type="evidence" value="ECO:0000314"/>
    <property type="project" value="UniProtKB"/>
</dbReference>
<dbReference type="GO" id="GO:0017017">
    <property type="term" value="F:MAP kinase tyrosine/serine/threonine phosphatase activity"/>
    <property type="evidence" value="ECO:0007669"/>
    <property type="project" value="InterPro"/>
</dbReference>
<dbReference type="GO" id="GO:0016791">
    <property type="term" value="F:phosphatase activity"/>
    <property type="evidence" value="ECO:0000314"/>
    <property type="project" value="UniProtKB"/>
</dbReference>
<dbReference type="GO" id="GO:0004721">
    <property type="term" value="F:phosphoprotein phosphatase activity"/>
    <property type="evidence" value="ECO:0000318"/>
    <property type="project" value="GO_Central"/>
</dbReference>
<dbReference type="GO" id="GO:0004725">
    <property type="term" value="F:protein tyrosine phosphatase activity"/>
    <property type="evidence" value="ECO:0000314"/>
    <property type="project" value="UniProtKB"/>
</dbReference>
<dbReference type="GO" id="GO:0008330">
    <property type="term" value="F:protein tyrosine/threonine phosphatase activity"/>
    <property type="evidence" value="ECO:0000314"/>
    <property type="project" value="UniProtKB"/>
</dbReference>
<dbReference type="GO" id="GO:0016311">
    <property type="term" value="P:dephosphorylation"/>
    <property type="evidence" value="ECO:0000314"/>
    <property type="project" value="UniProtKB"/>
</dbReference>
<dbReference type="GO" id="GO:0001706">
    <property type="term" value="P:endoderm formation"/>
    <property type="evidence" value="ECO:0000318"/>
    <property type="project" value="GO_Central"/>
</dbReference>
<dbReference type="GO" id="GO:0070373">
    <property type="term" value="P:negative regulation of ERK1 and ERK2 cascade"/>
    <property type="evidence" value="ECO:0000315"/>
    <property type="project" value="UniProtKB"/>
</dbReference>
<dbReference type="GO" id="GO:0043409">
    <property type="term" value="P:negative regulation of MAPK cascade"/>
    <property type="evidence" value="ECO:0000318"/>
    <property type="project" value="GO_Central"/>
</dbReference>
<dbReference type="GO" id="GO:0007165">
    <property type="term" value="P:signal transduction"/>
    <property type="evidence" value="ECO:0000318"/>
    <property type="project" value="GO_Central"/>
</dbReference>
<dbReference type="CDD" id="cd14640">
    <property type="entry name" value="DSP_DUSP4"/>
    <property type="match status" value="1"/>
</dbReference>
<dbReference type="CDD" id="cd01446">
    <property type="entry name" value="DSP_MapKP"/>
    <property type="match status" value="1"/>
</dbReference>
<dbReference type="FunFam" id="3.40.250.10:FF:000027">
    <property type="entry name" value="Dual specificity phosphatase 4"/>
    <property type="match status" value="1"/>
</dbReference>
<dbReference type="FunFam" id="3.90.190.10:FF:000015">
    <property type="entry name" value="Dual specificity phosphatase 4"/>
    <property type="match status" value="1"/>
</dbReference>
<dbReference type="Gene3D" id="3.90.190.10">
    <property type="entry name" value="Protein tyrosine phosphatase superfamily"/>
    <property type="match status" value="1"/>
</dbReference>
<dbReference type="Gene3D" id="3.40.250.10">
    <property type="entry name" value="Rhodanese-like domain"/>
    <property type="match status" value="1"/>
</dbReference>
<dbReference type="InterPro" id="IPR000340">
    <property type="entry name" value="Dual-sp_phosphatase_cat-dom"/>
</dbReference>
<dbReference type="InterPro" id="IPR008343">
    <property type="entry name" value="MKP"/>
</dbReference>
<dbReference type="InterPro" id="IPR029021">
    <property type="entry name" value="Prot-tyrosine_phosphatase-like"/>
</dbReference>
<dbReference type="InterPro" id="IPR001763">
    <property type="entry name" value="Rhodanese-like_dom"/>
</dbReference>
<dbReference type="InterPro" id="IPR036873">
    <property type="entry name" value="Rhodanese-like_dom_sf"/>
</dbReference>
<dbReference type="InterPro" id="IPR016130">
    <property type="entry name" value="Tyr_Pase_AS"/>
</dbReference>
<dbReference type="InterPro" id="IPR003595">
    <property type="entry name" value="Tyr_Pase_cat"/>
</dbReference>
<dbReference type="InterPro" id="IPR000387">
    <property type="entry name" value="Tyr_Pase_dom"/>
</dbReference>
<dbReference type="InterPro" id="IPR020422">
    <property type="entry name" value="TYR_PHOSPHATASE_DUAL_dom"/>
</dbReference>
<dbReference type="PANTHER" id="PTHR10159">
    <property type="entry name" value="DUAL SPECIFICITY PROTEIN PHOSPHATASE"/>
    <property type="match status" value="1"/>
</dbReference>
<dbReference type="PANTHER" id="PTHR10159:SF111">
    <property type="entry name" value="DUAL SPECIFICITY PROTEIN PHOSPHATASE 4"/>
    <property type="match status" value="1"/>
</dbReference>
<dbReference type="Pfam" id="PF00782">
    <property type="entry name" value="DSPc"/>
    <property type="match status" value="1"/>
</dbReference>
<dbReference type="Pfam" id="PF00581">
    <property type="entry name" value="Rhodanese"/>
    <property type="match status" value="1"/>
</dbReference>
<dbReference type="PIRSF" id="PIRSF000939">
    <property type="entry name" value="MAPK_Ptase"/>
    <property type="match status" value="1"/>
</dbReference>
<dbReference type="PRINTS" id="PR01764">
    <property type="entry name" value="MAPKPHPHTASE"/>
</dbReference>
<dbReference type="SMART" id="SM00195">
    <property type="entry name" value="DSPc"/>
    <property type="match status" value="1"/>
</dbReference>
<dbReference type="SMART" id="SM00404">
    <property type="entry name" value="PTPc_motif"/>
    <property type="match status" value="1"/>
</dbReference>
<dbReference type="SMART" id="SM00450">
    <property type="entry name" value="RHOD"/>
    <property type="match status" value="1"/>
</dbReference>
<dbReference type="SUPFAM" id="SSF52799">
    <property type="entry name" value="(Phosphotyrosine protein) phosphatases II"/>
    <property type="match status" value="1"/>
</dbReference>
<dbReference type="SUPFAM" id="SSF52821">
    <property type="entry name" value="Rhodanese/Cell cycle control phosphatase"/>
    <property type="match status" value="1"/>
</dbReference>
<dbReference type="PROSITE" id="PS50206">
    <property type="entry name" value="RHODANESE_3"/>
    <property type="match status" value="1"/>
</dbReference>
<dbReference type="PROSITE" id="PS00383">
    <property type="entry name" value="TYR_PHOSPHATASE_1"/>
    <property type="match status" value="1"/>
</dbReference>
<dbReference type="PROSITE" id="PS50056">
    <property type="entry name" value="TYR_PHOSPHATASE_2"/>
    <property type="match status" value="1"/>
</dbReference>
<dbReference type="PROSITE" id="PS50054">
    <property type="entry name" value="TYR_PHOSPHATASE_DUAL"/>
    <property type="match status" value="1"/>
</dbReference>
<name>DUS4_HUMAN</name>
<evidence type="ECO:0000255" key="1">
    <source>
        <dbReference type="PROSITE-ProRule" id="PRU00160"/>
    </source>
</evidence>
<evidence type="ECO:0000255" key="2">
    <source>
        <dbReference type="PROSITE-ProRule" id="PRU00173"/>
    </source>
</evidence>
<evidence type="ECO:0000255" key="3">
    <source>
        <dbReference type="PROSITE-ProRule" id="PRU10044"/>
    </source>
</evidence>
<evidence type="ECO:0000269" key="4">
    <source>
    </source>
</evidence>
<evidence type="ECO:0000269" key="5">
    <source>
    </source>
</evidence>
<evidence type="ECO:0000269" key="6">
    <source>
    </source>
</evidence>
<evidence type="ECO:0000269" key="7">
    <source>
    </source>
</evidence>
<evidence type="ECO:0000303" key="8">
    <source>
    </source>
</evidence>
<evidence type="ECO:0000305" key="9"/>
<evidence type="ECO:0007829" key="10">
    <source>
        <dbReference type="PDB" id="3EZZ"/>
    </source>
</evidence>
<keyword id="KW-0002">3D-structure</keyword>
<keyword id="KW-0007">Acetylation</keyword>
<keyword id="KW-0025">Alternative splicing</keyword>
<keyword id="KW-0378">Hydrolase</keyword>
<keyword id="KW-0539">Nucleus</keyword>
<keyword id="KW-0597">Phosphoprotein</keyword>
<keyword id="KW-0904">Protein phosphatase</keyword>
<keyword id="KW-1267">Proteomics identification</keyword>
<keyword id="KW-1185">Reference proteome</keyword>